<name>ODO2_ECO57</name>
<protein>
    <recommendedName>
        <fullName>Dihydrolipoyllysine-residue succinyltransferase component of 2-oxoglutarate dehydrogenase complex</fullName>
        <ecNumber evidence="2">2.3.1.61</ecNumber>
    </recommendedName>
    <alternativeName>
        <fullName>2-oxoglutarate dehydrogenase complex component E2</fullName>
        <shortName>OGDC-E2</shortName>
    </alternativeName>
    <alternativeName>
        <fullName>Dihydrolipoamide succinyltransferase component of 2-oxoglutarate dehydrogenase complex</fullName>
    </alternativeName>
</protein>
<dbReference type="EC" id="2.3.1.61" evidence="2"/>
<dbReference type="EMBL" id="AE005174">
    <property type="protein sequence ID" value="AAG55051.1"/>
    <property type="molecule type" value="Genomic_DNA"/>
</dbReference>
<dbReference type="EMBL" id="BA000007">
    <property type="protein sequence ID" value="BAB34175.1"/>
    <property type="molecule type" value="Genomic_DNA"/>
</dbReference>
<dbReference type="PIR" id="G85573">
    <property type="entry name" value="G85573"/>
</dbReference>
<dbReference type="PIR" id="H90722">
    <property type="entry name" value="H90722"/>
</dbReference>
<dbReference type="RefSeq" id="NP_308779.1">
    <property type="nucleotide sequence ID" value="NC_002695.1"/>
</dbReference>
<dbReference type="PDB" id="2CYU">
    <property type="method" value="NMR"/>
    <property type="chains" value="A=113-152"/>
</dbReference>
<dbReference type="PDBsum" id="2CYU"/>
<dbReference type="BMRB" id="P0AFG7"/>
<dbReference type="SMR" id="P0AFG7"/>
<dbReference type="STRING" id="155864.Z0881"/>
<dbReference type="GeneID" id="917484"/>
<dbReference type="KEGG" id="ece:Z0881"/>
<dbReference type="KEGG" id="ecs:ECs_0752"/>
<dbReference type="PATRIC" id="fig|386585.9.peg.870"/>
<dbReference type="eggNOG" id="COG0508">
    <property type="taxonomic scope" value="Bacteria"/>
</dbReference>
<dbReference type="HOGENOM" id="CLU_016733_0_0_6"/>
<dbReference type="OMA" id="NMPQTAV"/>
<dbReference type="UniPathway" id="UPA00868">
    <property type="reaction ID" value="UER00840"/>
</dbReference>
<dbReference type="EvolutionaryTrace" id="P0AFG7"/>
<dbReference type="Proteomes" id="UP000000558">
    <property type="component" value="Chromosome"/>
</dbReference>
<dbReference type="Proteomes" id="UP000002519">
    <property type="component" value="Chromosome"/>
</dbReference>
<dbReference type="GO" id="GO:0005829">
    <property type="term" value="C:cytosol"/>
    <property type="evidence" value="ECO:0007669"/>
    <property type="project" value="TreeGrafter"/>
</dbReference>
<dbReference type="GO" id="GO:0045252">
    <property type="term" value="C:oxoglutarate dehydrogenase complex"/>
    <property type="evidence" value="ECO:0007669"/>
    <property type="project" value="InterPro"/>
</dbReference>
<dbReference type="GO" id="GO:0004149">
    <property type="term" value="F:dihydrolipoyllysine-residue succinyltransferase activity"/>
    <property type="evidence" value="ECO:0007669"/>
    <property type="project" value="UniProtKB-EC"/>
</dbReference>
<dbReference type="GO" id="GO:0033512">
    <property type="term" value="P:L-lysine catabolic process to acetyl-CoA via saccharopine"/>
    <property type="evidence" value="ECO:0007669"/>
    <property type="project" value="UniProtKB-UniPathway"/>
</dbReference>
<dbReference type="GO" id="GO:0006099">
    <property type="term" value="P:tricarboxylic acid cycle"/>
    <property type="evidence" value="ECO:0007669"/>
    <property type="project" value="UniProtKB-KW"/>
</dbReference>
<dbReference type="CDD" id="cd06849">
    <property type="entry name" value="lipoyl_domain"/>
    <property type="match status" value="1"/>
</dbReference>
<dbReference type="FunFam" id="2.40.50.100:FF:000015">
    <property type="entry name" value="Dihydrolipoyllysine-residue succinyltransferase component of 2-oxoglutarate dehydrogenase complex"/>
    <property type="match status" value="1"/>
</dbReference>
<dbReference type="FunFam" id="3.30.559.10:FF:000005">
    <property type="entry name" value="Dihydrolipoyllysine-residue succinyltransferase component of 2-oxoglutarate dehydrogenase complex"/>
    <property type="match status" value="1"/>
</dbReference>
<dbReference type="FunFam" id="4.10.320.10:FF:000001">
    <property type="entry name" value="Dihydrolipoyllysine-residue succinyltransferase component of 2-oxoglutarate dehydrogenase complex"/>
    <property type="match status" value="1"/>
</dbReference>
<dbReference type="Gene3D" id="2.40.50.100">
    <property type="match status" value="1"/>
</dbReference>
<dbReference type="Gene3D" id="3.30.559.10">
    <property type="entry name" value="Chloramphenicol acetyltransferase-like domain"/>
    <property type="match status" value="1"/>
</dbReference>
<dbReference type="Gene3D" id="4.10.320.10">
    <property type="entry name" value="E3-binding domain"/>
    <property type="match status" value="1"/>
</dbReference>
<dbReference type="InterPro" id="IPR003016">
    <property type="entry name" value="2-oxoA_DH_lipoyl-BS"/>
</dbReference>
<dbReference type="InterPro" id="IPR050537">
    <property type="entry name" value="2-oxoacid_dehydrogenase"/>
</dbReference>
<dbReference type="InterPro" id="IPR001078">
    <property type="entry name" value="2-oxoacid_DH_actylTfrase"/>
</dbReference>
<dbReference type="InterPro" id="IPR000089">
    <property type="entry name" value="Biotin_lipoyl"/>
</dbReference>
<dbReference type="InterPro" id="IPR023213">
    <property type="entry name" value="CAT-like_dom_sf"/>
</dbReference>
<dbReference type="InterPro" id="IPR036625">
    <property type="entry name" value="E3-bd_dom_sf"/>
</dbReference>
<dbReference type="InterPro" id="IPR004167">
    <property type="entry name" value="PSBD"/>
</dbReference>
<dbReference type="InterPro" id="IPR011053">
    <property type="entry name" value="Single_hybrid_motif"/>
</dbReference>
<dbReference type="InterPro" id="IPR006255">
    <property type="entry name" value="SucB"/>
</dbReference>
<dbReference type="NCBIfam" id="NF004309">
    <property type="entry name" value="PRK05704.1"/>
    <property type="match status" value="1"/>
</dbReference>
<dbReference type="NCBIfam" id="TIGR01347">
    <property type="entry name" value="sucB"/>
    <property type="match status" value="1"/>
</dbReference>
<dbReference type="PANTHER" id="PTHR43416:SF5">
    <property type="entry name" value="DIHYDROLIPOYLLYSINE-RESIDUE SUCCINYLTRANSFERASE COMPONENT OF 2-OXOGLUTARATE DEHYDROGENASE COMPLEX, MITOCHONDRIAL"/>
    <property type="match status" value="1"/>
</dbReference>
<dbReference type="PANTHER" id="PTHR43416">
    <property type="entry name" value="DIHYDROLIPOYLLYSINE-RESIDUE SUCCINYLTRANSFERASE COMPONENT OF 2-OXOGLUTARATE DEHYDROGENASE COMPLEX, MITOCHONDRIAL-RELATED"/>
    <property type="match status" value="1"/>
</dbReference>
<dbReference type="Pfam" id="PF00198">
    <property type="entry name" value="2-oxoacid_dh"/>
    <property type="match status" value="1"/>
</dbReference>
<dbReference type="Pfam" id="PF00364">
    <property type="entry name" value="Biotin_lipoyl"/>
    <property type="match status" value="1"/>
</dbReference>
<dbReference type="Pfam" id="PF02817">
    <property type="entry name" value="E3_binding"/>
    <property type="match status" value="1"/>
</dbReference>
<dbReference type="SUPFAM" id="SSF52777">
    <property type="entry name" value="CoA-dependent acyltransferases"/>
    <property type="match status" value="1"/>
</dbReference>
<dbReference type="SUPFAM" id="SSF47005">
    <property type="entry name" value="Peripheral subunit-binding domain of 2-oxo acid dehydrogenase complex"/>
    <property type="match status" value="1"/>
</dbReference>
<dbReference type="SUPFAM" id="SSF51230">
    <property type="entry name" value="Single hybrid motif"/>
    <property type="match status" value="1"/>
</dbReference>
<dbReference type="PROSITE" id="PS50968">
    <property type="entry name" value="BIOTINYL_LIPOYL"/>
    <property type="match status" value="1"/>
</dbReference>
<dbReference type="PROSITE" id="PS00189">
    <property type="entry name" value="LIPOYL"/>
    <property type="match status" value="1"/>
</dbReference>
<dbReference type="PROSITE" id="PS51826">
    <property type="entry name" value="PSBD"/>
    <property type="match status" value="1"/>
</dbReference>
<comment type="function">
    <text evidence="2">E2 component of the 2-oxoglutarate dehydrogenase (OGDH) complex which catalyzes the second step in the conversion of 2-oxoglutarate to succinyl-CoA and CO(2).</text>
</comment>
<comment type="catalytic activity">
    <reaction evidence="2">
        <text>N(6)-[(R)-dihydrolipoyl]-L-lysyl-[protein] + succinyl-CoA = N(6)-[(R)-S(8)-succinyldihydrolipoyl]-L-lysyl-[protein] + CoA</text>
        <dbReference type="Rhea" id="RHEA:15213"/>
        <dbReference type="Rhea" id="RHEA-COMP:10475"/>
        <dbReference type="Rhea" id="RHEA-COMP:20092"/>
        <dbReference type="ChEBI" id="CHEBI:57287"/>
        <dbReference type="ChEBI" id="CHEBI:57292"/>
        <dbReference type="ChEBI" id="CHEBI:83100"/>
        <dbReference type="ChEBI" id="CHEBI:83120"/>
        <dbReference type="EC" id="2.3.1.61"/>
    </reaction>
</comment>
<comment type="cofactor">
    <cofactor evidence="1">
        <name>(R)-lipoate</name>
        <dbReference type="ChEBI" id="CHEBI:83088"/>
    </cofactor>
    <text evidence="1">Binds 1 lipoyl cofactor covalently.</text>
</comment>
<comment type="pathway">
    <text>Amino-acid degradation; L-lysine degradation via saccharopine pathway; glutaryl-CoA from L-lysine: step 6/6.</text>
</comment>
<comment type="subunit">
    <text evidence="2">Forms a 24-polypeptide structural core with octahedral symmetry. Part of the 2-oxoglutarate dehydrogenase (OGDH) complex composed of E1 (2-oxoglutarate dehydrogenase), E2 (dihydrolipoamide succinyltransferase) and E3 (dihydrolipoamide dehydrogenase); the complex contains multiple copies of the three enzymatic components (E1, E2 and E3). Interacts with SucA (via N-terminus), the E1 component of OGDH complex.</text>
</comment>
<comment type="similarity">
    <text evidence="6">Belongs to the 2-oxoacid dehydrogenase family.</text>
</comment>
<reference key="1">
    <citation type="journal article" date="2001" name="Nature">
        <title>Genome sequence of enterohaemorrhagic Escherichia coli O157:H7.</title>
        <authorList>
            <person name="Perna N.T."/>
            <person name="Plunkett G. III"/>
            <person name="Burland V."/>
            <person name="Mau B."/>
            <person name="Glasner J.D."/>
            <person name="Rose D.J."/>
            <person name="Mayhew G.F."/>
            <person name="Evans P.S."/>
            <person name="Gregor J."/>
            <person name="Kirkpatrick H.A."/>
            <person name="Posfai G."/>
            <person name="Hackett J."/>
            <person name="Klink S."/>
            <person name="Boutin A."/>
            <person name="Shao Y."/>
            <person name="Miller L."/>
            <person name="Grotbeck E.J."/>
            <person name="Davis N.W."/>
            <person name="Lim A."/>
            <person name="Dimalanta E.T."/>
            <person name="Potamousis K."/>
            <person name="Apodaca J."/>
            <person name="Anantharaman T.S."/>
            <person name="Lin J."/>
            <person name="Yen G."/>
            <person name="Schwartz D.C."/>
            <person name="Welch R.A."/>
            <person name="Blattner F.R."/>
        </authorList>
    </citation>
    <scope>NUCLEOTIDE SEQUENCE [LARGE SCALE GENOMIC DNA]</scope>
    <source>
        <strain>O157:H7 / EDL933 / ATCC 700927 / EHEC</strain>
    </source>
</reference>
<reference key="2">
    <citation type="journal article" date="2001" name="DNA Res.">
        <title>Complete genome sequence of enterohemorrhagic Escherichia coli O157:H7 and genomic comparison with a laboratory strain K-12.</title>
        <authorList>
            <person name="Hayashi T."/>
            <person name="Makino K."/>
            <person name="Ohnishi M."/>
            <person name="Kurokawa K."/>
            <person name="Ishii K."/>
            <person name="Yokoyama K."/>
            <person name="Han C.-G."/>
            <person name="Ohtsubo E."/>
            <person name="Nakayama K."/>
            <person name="Murata T."/>
            <person name="Tanaka M."/>
            <person name="Tobe T."/>
            <person name="Iida T."/>
            <person name="Takami H."/>
            <person name="Honda T."/>
            <person name="Sasakawa C."/>
            <person name="Ogasawara N."/>
            <person name="Yasunaga T."/>
            <person name="Kuhara S."/>
            <person name="Shiba T."/>
            <person name="Hattori M."/>
            <person name="Shinagawa H."/>
        </authorList>
    </citation>
    <scope>NUCLEOTIDE SEQUENCE [LARGE SCALE GENOMIC DNA]</scope>
    <source>
        <strain>O157:H7 / Sakai / RIMD 0509952 / EHEC</strain>
    </source>
</reference>
<sequence>MSSVDILVPDLPESVADATVATWHKKPGDAVVRDEVLVEIETDKVVLEVPASADGILDAVLEDEGTTVTSRQILGRLREGNSAGKETSAKSEEKASTPAQRQQASLEEQNNDALSPAIRRLLAEHNLDASAIKGTGVGGRLTREDVEKHLAKAPAKESAPAAAAPAAQPALAARSEKRVPMTRLRKRVAERLLEAKNSTAMLTTFNEVNMKPIMDLRKQYGEAFEKRHGIRLGFMSFYVKAVVEALKRYPEVNASIDGDDVVYHNYFDVSMAVSTPRGLVTPVLRDVDTLGMADIEKKIKELAVKGRDGKLTVEDLTGGNFTITNGGVFGSLMSTPIINPPQSAILGMHAIKDRPMAVNGQVEILPMMYLALSYDHRLIDGRESVGFLVTIKELLEDPTRLLLDV</sequence>
<keyword id="KW-0002">3D-structure</keyword>
<keyword id="KW-0007">Acetylation</keyword>
<keyword id="KW-0012">Acyltransferase</keyword>
<keyword id="KW-0450">Lipoyl</keyword>
<keyword id="KW-1185">Reference proteome</keyword>
<keyword id="KW-0808">Transferase</keyword>
<keyword id="KW-0816">Tricarboxylic acid cycle</keyword>
<accession>P0AFG7</accession>
<accession>P07016</accession>
<feature type="initiator methionine" description="Removed" evidence="1">
    <location>
        <position position="1"/>
    </location>
</feature>
<feature type="chain" id="PRO_0000162263" description="Dihydrolipoyllysine-residue succinyltransferase component of 2-oxoglutarate dehydrogenase complex">
    <location>
        <begin position="2"/>
        <end position="405"/>
    </location>
</feature>
<feature type="domain" description="Lipoyl-binding" evidence="3">
    <location>
        <begin position="3"/>
        <end position="78"/>
    </location>
</feature>
<feature type="domain" description="Peripheral subunit-binding (PSBD)" evidence="4">
    <location>
        <begin position="113"/>
        <end position="150"/>
    </location>
</feature>
<feature type="region of interest" description="Disordered" evidence="5">
    <location>
        <begin position="75"/>
        <end position="111"/>
    </location>
</feature>
<feature type="region of interest" description="Disordered" evidence="5">
    <location>
        <begin position="153"/>
        <end position="178"/>
    </location>
</feature>
<feature type="compositionally biased region" description="Polar residues" evidence="5">
    <location>
        <begin position="97"/>
        <end position="111"/>
    </location>
</feature>
<feature type="compositionally biased region" description="Low complexity" evidence="5">
    <location>
        <begin position="153"/>
        <end position="173"/>
    </location>
</feature>
<feature type="active site" evidence="2">
    <location>
        <position position="376"/>
    </location>
</feature>
<feature type="active site" evidence="2">
    <location>
        <position position="380"/>
    </location>
</feature>
<feature type="modified residue" description="N6-lipoyllysine" evidence="1 3">
    <location>
        <position position="44"/>
    </location>
</feature>
<feature type="modified residue" description="N6-acetyllysine" evidence="1">
    <location>
        <position position="148"/>
    </location>
</feature>
<feature type="helix" evidence="7">
    <location>
        <begin position="118"/>
        <end position="125"/>
    </location>
</feature>
<feature type="helix" evidence="7">
    <location>
        <begin position="129"/>
        <end position="131"/>
    </location>
</feature>
<feature type="strand" evidence="7">
    <location>
        <begin position="136"/>
        <end position="139"/>
    </location>
</feature>
<feature type="helix" evidence="7">
    <location>
        <begin position="143"/>
        <end position="149"/>
    </location>
</feature>
<evidence type="ECO:0000250" key="1"/>
<evidence type="ECO:0000250" key="2">
    <source>
        <dbReference type="UniProtKB" id="P0AFG6"/>
    </source>
</evidence>
<evidence type="ECO:0000255" key="3">
    <source>
        <dbReference type="PROSITE-ProRule" id="PRU01066"/>
    </source>
</evidence>
<evidence type="ECO:0000255" key="4">
    <source>
        <dbReference type="PROSITE-ProRule" id="PRU01170"/>
    </source>
</evidence>
<evidence type="ECO:0000256" key="5">
    <source>
        <dbReference type="SAM" id="MobiDB-lite"/>
    </source>
</evidence>
<evidence type="ECO:0000305" key="6"/>
<evidence type="ECO:0007829" key="7">
    <source>
        <dbReference type="PDB" id="2CYU"/>
    </source>
</evidence>
<proteinExistence type="evidence at protein level"/>
<gene>
    <name type="primary">sucB</name>
    <name type="ordered locus">Z0881</name>
    <name type="ordered locus">ECs0752</name>
</gene>
<organism>
    <name type="scientific">Escherichia coli O157:H7</name>
    <dbReference type="NCBI Taxonomy" id="83334"/>
    <lineage>
        <taxon>Bacteria</taxon>
        <taxon>Pseudomonadati</taxon>
        <taxon>Pseudomonadota</taxon>
        <taxon>Gammaproteobacteria</taxon>
        <taxon>Enterobacterales</taxon>
        <taxon>Enterobacteriaceae</taxon>
        <taxon>Escherichia</taxon>
    </lineage>
</organism>